<dbReference type="PDB" id="1IY5">
    <property type="method" value="NMR"/>
    <property type="chains" value="A=3-56"/>
</dbReference>
<dbReference type="PDB" id="1IY6">
    <property type="method" value="NMR"/>
    <property type="chains" value="A=3-56"/>
</dbReference>
<dbReference type="PDB" id="2OVO">
    <property type="method" value="X-ray"/>
    <property type="resolution" value="1.50 A"/>
    <property type="chains" value="A=1-56"/>
</dbReference>
<dbReference type="PDB" id="4OVO">
    <property type="method" value="X-ray"/>
    <property type="resolution" value="2.50 A"/>
    <property type="chains" value="A=1-56"/>
</dbReference>
<dbReference type="PDBsum" id="1IY5"/>
<dbReference type="PDBsum" id="1IY6"/>
<dbReference type="PDBsum" id="2OVO"/>
<dbReference type="PDBsum" id="4OVO"/>
<dbReference type="SMR" id="P67954"/>
<dbReference type="EvolutionaryTrace" id="P67954"/>
<dbReference type="GO" id="GO:0005615">
    <property type="term" value="C:extracellular space"/>
    <property type="evidence" value="ECO:0007669"/>
    <property type="project" value="UniProtKB-ARBA"/>
</dbReference>
<dbReference type="GO" id="GO:0004867">
    <property type="term" value="F:serine-type endopeptidase inhibitor activity"/>
    <property type="evidence" value="ECO:0007669"/>
    <property type="project" value="UniProtKB-KW"/>
</dbReference>
<dbReference type="CDD" id="cd00104">
    <property type="entry name" value="KAZAL_FS"/>
    <property type="match status" value="1"/>
</dbReference>
<dbReference type="FunFam" id="3.30.60.30:FF:000037">
    <property type="entry name" value="Ovomucoid"/>
    <property type="match status" value="1"/>
</dbReference>
<dbReference type="Gene3D" id="3.30.60.30">
    <property type="match status" value="1"/>
</dbReference>
<dbReference type="InterPro" id="IPR051597">
    <property type="entry name" value="Bifunctional_prot_inhibitor"/>
</dbReference>
<dbReference type="InterPro" id="IPR002350">
    <property type="entry name" value="Kazal_dom"/>
</dbReference>
<dbReference type="InterPro" id="IPR036058">
    <property type="entry name" value="Kazal_dom_sf"/>
</dbReference>
<dbReference type="InterPro" id="IPR001239">
    <property type="entry name" value="Prot_inh_Kazal-m"/>
</dbReference>
<dbReference type="PANTHER" id="PTHR47729:SF1">
    <property type="entry name" value="OVOMUCOID-LIKE-RELATED"/>
    <property type="match status" value="1"/>
</dbReference>
<dbReference type="PANTHER" id="PTHR47729">
    <property type="entry name" value="SERINE PEPTIDASE INHIBITOR, KAZAL TYPE 2, TANDEM DUPLICATE 1-RELATED"/>
    <property type="match status" value="1"/>
</dbReference>
<dbReference type="Pfam" id="PF00050">
    <property type="entry name" value="Kazal_1"/>
    <property type="match status" value="1"/>
</dbReference>
<dbReference type="PRINTS" id="PR00290">
    <property type="entry name" value="KAZALINHBTR"/>
</dbReference>
<dbReference type="SMART" id="SM00280">
    <property type="entry name" value="KAZAL"/>
    <property type="match status" value="1"/>
</dbReference>
<dbReference type="SUPFAM" id="SSF100895">
    <property type="entry name" value="Kazal-type serine protease inhibitors"/>
    <property type="match status" value="1"/>
</dbReference>
<dbReference type="PROSITE" id="PS00282">
    <property type="entry name" value="KAZAL_1"/>
    <property type="match status" value="1"/>
</dbReference>
<dbReference type="PROSITE" id="PS51465">
    <property type="entry name" value="KAZAL_2"/>
    <property type="match status" value="1"/>
</dbReference>
<protein>
    <recommendedName>
        <fullName>Ovomucoid</fullName>
    </recommendedName>
</protein>
<evidence type="ECO:0000255" key="1">
    <source>
        <dbReference type="PROSITE-ProRule" id="PRU00798"/>
    </source>
</evidence>
<evidence type="ECO:0007829" key="2">
    <source>
        <dbReference type="PDB" id="1IY5"/>
    </source>
</evidence>
<evidence type="ECO:0007829" key="3">
    <source>
        <dbReference type="PDB" id="2OVO"/>
    </source>
</evidence>
<accession>P67954</accession>
<accession>P05586</accession>
<feature type="chain" id="PRO_0000073138" description="Ovomucoid">
    <location>
        <begin position="1" status="less than"/>
        <end position="56" status="greater than"/>
    </location>
</feature>
<feature type="domain" description="Kazal-like" evidence="1">
    <location>
        <begin position="6"/>
        <end position="56"/>
    </location>
</feature>
<feature type="site" description="Reactive bond 3">
    <location>
        <begin position="18"/>
        <end position="19"/>
    </location>
</feature>
<feature type="glycosylation site" description="N-linked (GlcNAc...) asparagine">
    <location>
        <position position="45"/>
    </location>
</feature>
<feature type="disulfide bond">
    <location>
        <begin position="8"/>
        <end position="38"/>
    </location>
</feature>
<feature type="disulfide bond">
    <location>
        <begin position="16"/>
        <end position="35"/>
    </location>
</feature>
<feature type="disulfide bond">
    <location>
        <begin position="24"/>
        <end position="56"/>
    </location>
</feature>
<feature type="non-terminal residue">
    <location>
        <position position="1"/>
    </location>
</feature>
<feature type="non-terminal residue">
    <location>
        <position position="56"/>
    </location>
</feature>
<feature type="strand" evidence="3">
    <location>
        <begin position="23"/>
        <end position="25"/>
    </location>
</feature>
<feature type="turn" evidence="2">
    <location>
        <begin position="26"/>
        <end position="28"/>
    </location>
</feature>
<feature type="strand" evidence="3">
    <location>
        <begin position="30"/>
        <end position="33"/>
    </location>
</feature>
<feature type="helix" evidence="3">
    <location>
        <begin position="34"/>
        <end position="43"/>
    </location>
</feature>
<feature type="turn" evidence="3">
    <location>
        <begin position="44"/>
        <end position="46"/>
    </location>
</feature>
<feature type="strand" evidence="3">
    <location>
        <begin position="50"/>
        <end position="54"/>
    </location>
</feature>
<sequence length="56" mass="6039">LAAVSVDCSEYPKPACTMEYRPLCGSDNKTYGNKCNFCNAVVESNGTLTLSHFGKC</sequence>
<comment type="subcellular location">
    <subcellularLocation>
        <location>Secreted</location>
    </subcellularLocation>
</comment>
<comment type="domain">
    <text>Avian ovomucoid consists of three homologous, tandem Kazal family inhibitory domains.</text>
</comment>
<reference key="1">
    <citation type="journal article" date="1987" name="Biochemistry">
        <title>Ovomucoid third domains from 100 avian species: isolation, sequences, and hypervariability of enzyme-inhibitor contact residues.</title>
        <authorList>
            <person name="Laskowski M. Jr."/>
            <person name="Kato I."/>
            <person name="Ardelt W."/>
            <person name="Cook J."/>
            <person name="Denton A."/>
            <person name="Empie M.W."/>
            <person name="Kohr W.J."/>
            <person name="Park S.J."/>
            <person name="Parks K."/>
            <person name="Schatzley B.L."/>
            <person name="Schoenberger O.L."/>
            <person name="Tashiro M."/>
            <person name="Vichot G."/>
            <person name="Whatley H.E."/>
            <person name="Wieczorek A."/>
            <person name="Wieczorek M."/>
        </authorList>
    </citation>
    <scope>PROTEIN SEQUENCE</scope>
</reference>
<reference key="2">
    <citation type="journal article" date="1985" name="Eur. J. Biochem.">
        <title>The crystal and molecular structure of the third domain of silver pheasant ovomucoid (OMSVP3).</title>
        <authorList>
            <person name="Bode W."/>
            <person name="Epp O."/>
            <person name="Huber R."/>
            <person name="Laskowski M. Jr."/>
            <person name="Ardelt W."/>
        </authorList>
    </citation>
    <scope>X-RAY CRYSTALLOGRAPHY (1.5 ANGSTROMS)</scope>
</reference>
<reference key="3">
    <citation type="journal article" date="1991" name="J. Mol. Biol.">
        <title>Refined X-ray crystal structures of the reactive site modified ovomucoid inhibitor third domains from silver pheasant (OMSVP3*) and from Japanese quail (OMJPQ3*).</title>
        <authorList>
            <person name="Musil D."/>
            <person name="Bode W."/>
            <person name="Huber R."/>
            <person name="Laskowski M. Jr."/>
            <person name="Lin T.-Y."/>
            <person name="Ardelt W."/>
        </authorList>
    </citation>
    <scope>X-RAY CRYSTALLOGRAPHY (2.5 ANGSTROMS)</scope>
</reference>
<keyword id="KW-0002">3D-structure</keyword>
<keyword id="KW-0903">Direct protein sequencing</keyword>
<keyword id="KW-1015">Disulfide bond</keyword>
<keyword id="KW-0325">Glycoprotein</keyword>
<keyword id="KW-0646">Protease inhibitor</keyword>
<keyword id="KW-0677">Repeat</keyword>
<keyword id="KW-0964">Secreted</keyword>
<keyword id="KW-0722">Serine protease inhibitor</keyword>
<organism>
    <name type="scientific">Lophura nycthemera</name>
    <name type="common">Silver pheasant</name>
    <name type="synonym">Gennaeus nycthemerus</name>
    <dbReference type="NCBI Taxonomy" id="9046"/>
    <lineage>
        <taxon>Eukaryota</taxon>
        <taxon>Metazoa</taxon>
        <taxon>Chordata</taxon>
        <taxon>Craniata</taxon>
        <taxon>Vertebrata</taxon>
        <taxon>Euteleostomi</taxon>
        <taxon>Archelosauria</taxon>
        <taxon>Archosauria</taxon>
        <taxon>Dinosauria</taxon>
        <taxon>Saurischia</taxon>
        <taxon>Theropoda</taxon>
        <taxon>Coelurosauria</taxon>
        <taxon>Aves</taxon>
        <taxon>Neognathae</taxon>
        <taxon>Galloanserae</taxon>
        <taxon>Galliformes</taxon>
        <taxon>Phasianidae</taxon>
        <taxon>Phasianinae</taxon>
        <taxon>Lophura</taxon>
    </lineage>
</organism>
<name>IOVO_LOPNY</name>
<proteinExistence type="evidence at protein level"/>